<proteinExistence type="inferred from homology"/>
<accession>P26524</accession>
<sequence>MHLQLQYCLILAAALFCIGIYGLITSRNAVRVLMSIELLLNAVNLNLMGFSNYLDPSNIRGQVFAIFVITIAAAEAAVGLAIVLAIYRNRETTDMEQFNLLKW</sequence>
<name>NU4LC_SYNY3</name>
<evidence type="ECO:0000255" key="1">
    <source>
        <dbReference type="HAMAP-Rule" id="MF_01456"/>
    </source>
</evidence>
<dbReference type="EC" id="7.1.1.-" evidence="1"/>
<dbReference type="EMBL" id="X62517">
    <property type="protein sequence ID" value="CAA44377.1"/>
    <property type="molecule type" value="Genomic_DNA"/>
</dbReference>
<dbReference type="EMBL" id="BA000022">
    <property type="protein sequence ID" value="BAA10882.1"/>
    <property type="molecule type" value="Genomic_DNA"/>
</dbReference>
<dbReference type="PIR" id="S27975">
    <property type="entry name" value="QXYB4L"/>
</dbReference>
<dbReference type="SMR" id="P26524"/>
<dbReference type="IntAct" id="P26524">
    <property type="interactions" value="1"/>
</dbReference>
<dbReference type="STRING" id="1148.gene:10500388"/>
<dbReference type="PaxDb" id="1148-1001392"/>
<dbReference type="EnsemblBacteria" id="BAA10882">
    <property type="protein sequence ID" value="BAA10882"/>
    <property type="gene ID" value="BAA10882"/>
</dbReference>
<dbReference type="KEGG" id="syn:sll0522"/>
<dbReference type="eggNOG" id="COG0713">
    <property type="taxonomic scope" value="Bacteria"/>
</dbReference>
<dbReference type="InParanoid" id="P26524"/>
<dbReference type="PhylomeDB" id="P26524"/>
<dbReference type="Proteomes" id="UP000001425">
    <property type="component" value="Chromosome"/>
</dbReference>
<dbReference type="GO" id="GO:0030964">
    <property type="term" value="C:NADH dehydrogenase complex"/>
    <property type="evidence" value="ECO:0000318"/>
    <property type="project" value="GO_Central"/>
</dbReference>
<dbReference type="GO" id="GO:0031676">
    <property type="term" value="C:plasma membrane-derived thylakoid membrane"/>
    <property type="evidence" value="ECO:0007669"/>
    <property type="project" value="UniProtKB-SubCell"/>
</dbReference>
<dbReference type="GO" id="GO:0016655">
    <property type="term" value="F:oxidoreductase activity, acting on NAD(P)H, quinone or similar compound as acceptor"/>
    <property type="evidence" value="ECO:0007669"/>
    <property type="project" value="UniProtKB-UniRule"/>
</dbReference>
<dbReference type="GO" id="GO:0048038">
    <property type="term" value="F:quinone binding"/>
    <property type="evidence" value="ECO:0007669"/>
    <property type="project" value="UniProtKB-KW"/>
</dbReference>
<dbReference type="GO" id="GO:0042773">
    <property type="term" value="P:ATP synthesis coupled electron transport"/>
    <property type="evidence" value="ECO:0007669"/>
    <property type="project" value="InterPro"/>
</dbReference>
<dbReference type="GO" id="GO:0019684">
    <property type="term" value="P:photosynthesis, light reaction"/>
    <property type="evidence" value="ECO:0007669"/>
    <property type="project" value="UniProtKB-UniRule"/>
</dbReference>
<dbReference type="FunFam" id="1.10.287.3510:FF:000001">
    <property type="entry name" value="NADH-quinone oxidoreductase subunit K"/>
    <property type="match status" value="1"/>
</dbReference>
<dbReference type="Gene3D" id="1.10.287.3510">
    <property type="match status" value="1"/>
</dbReference>
<dbReference type="HAMAP" id="MF_01456">
    <property type="entry name" value="NDH1_NuoK"/>
    <property type="match status" value="1"/>
</dbReference>
<dbReference type="InterPro" id="IPR001133">
    <property type="entry name" value="NADH_UbQ_OxRdtase_chain4L/K"/>
</dbReference>
<dbReference type="InterPro" id="IPR039428">
    <property type="entry name" value="NUOK/Mnh_C1-like"/>
</dbReference>
<dbReference type="NCBIfam" id="NF004320">
    <property type="entry name" value="PRK05715.1-2"/>
    <property type="match status" value="1"/>
</dbReference>
<dbReference type="NCBIfam" id="NF004321">
    <property type="entry name" value="PRK05715.1-3"/>
    <property type="match status" value="1"/>
</dbReference>
<dbReference type="NCBIfam" id="NF004322">
    <property type="entry name" value="PRK05715.1-4"/>
    <property type="match status" value="1"/>
</dbReference>
<dbReference type="NCBIfam" id="NF004323">
    <property type="entry name" value="PRK05715.1-5"/>
    <property type="match status" value="1"/>
</dbReference>
<dbReference type="PANTHER" id="PTHR11434:SF16">
    <property type="entry name" value="NADH-UBIQUINONE OXIDOREDUCTASE CHAIN 4L"/>
    <property type="match status" value="1"/>
</dbReference>
<dbReference type="PANTHER" id="PTHR11434">
    <property type="entry name" value="NADH-UBIQUINONE OXIDOREDUCTASE SUBUNIT ND4L"/>
    <property type="match status" value="1"/>
</dbReference>
<dbReference type="Pfam" id="PF00420">
    <property type="entry name" value="Oxidored_q2"/>
    <property type="match status" value="1"/>
</dbReference>
<gene>
    <name evidence="1" type="primary">ndhE</name>
    <name type="ordered locus">sll0522</name>
</gene>
<feature type="chain" id="PRO_0000118521" description="NAD(P)H-quinone oxidoreductase subunit 4L">
    <location>
        <begin position="1"/>
        <end position="103"/>
    </location>
</feature>
<feature type="transmembrane region" description="Helical" evidence="1">
    <location>
        <begin position="5"/>
        <end position="25"/>
    </location>
</feature>
<feature type="transmembrane region" description="Helical" evidence="1">
    <location>
        <begin position="32"/>
        <end position="52"/>
    </location>
</feature>
<feature type="transmembrane region" description="Helical" evidence="1">
    <location>
        <begin position="66"/>
        <end position="86"/>
    </location>
</feature>
<comment type="function">
    <text evidence="1">NDH-1 shuttles electrons from an unknown electron donor, via FMN and iron-sulfur (Fe-S) centers, to quinones in the respiratory and/or the photosynthetic chain. The immediate electron acceptor for the enzyme in this species is believed to be plastoquinone. Couples the redox reaction to proton translocation, and thus conserves the redox energy in a proton gradient. Cyanobacterial NDH-1 also plays a role in inorganic carbon-concentration.</text>
</comment>
<comment type="catalytic activity">
    <reaction evidence="1">
        <text>a plastoquinone + NADH + (n+1) H(+)(in) = a plastoquinol + NAD(+) + n H(+)(out)</text>
        <dbReference type="Rhea" id="RHEA:42608"/>
        <dbReference type="Rhea" id="RHEA-COMP:9561"/>
        <dbReference type="Rhea" id="RHEA-COMP:9562"/>
        <dbReference type="ChEBI" id="CHEBI:15378"/>
        <dbReference type="ChEBI" id="CHEBI:17757"/>
        <dbReference type="ChEBI" id="CHEBI:57540"/>
        <dbReference type="ChEBI" id="CHEBI:57945"/>
        <dbReference type="ChEBI" id="CHEBI:62192"/>
    </reaction>
</comment>
<comment type="catalytic activity">
    <reaction evidence="1">
        <text>a plastoquinone + NADPH + (n+1) H(+)(in) = a plastoquinol + NADP(+) + n H(+)(out)</text>
        <dbReference type="Rhea" id="RHEA:42612"/>
        <dbReference type="Rhea" id="RHEA-COMP:9561"/>
        <dbReference type="Rhea" id="RHEA-COMP:9562"/>
        <dbReference type="ChEBI" id="CHEBI:15378"/>
        <dbReference type="ChEBI" id="CHEBI:17757"/>
        <dbReference type="ChEBI" id="CHEBI:57783"/>
        <dbReference type="ChEBI" id="CHEBI:58349"/>
        <dbReference type="ChEBI" id="CHEBI:62192"/>
    </reaction>
</comment>
<comment type="subunit">
    <text evidence="1">NDH-1 can be composed of about 15 different subunits; different subcomplexes with different compositions have been identified which probably have different functions.</text>
</comment>
<comment type="subcellular location">
    <subcellularLocation>
        <location evidence="1">Cellular thylakoid membrane</location>
        <topology evidence="1">Multi-pass membrane protein</topology>
    </subcellularLocation>
</comment>
<comment type="similarity">
    <text evidence="1">Belongs to the complex I subunit 4L family.</text>
</comment>
<keyword id="KW-0472">Membrane</keyword>
<keyword id="KW-0520">NAD</keyword>
<keyword id="KW-0521">NADP</keyword>
<keyword id="KW-0618">Plastoquinone</keyword>
<keyword id="KW-0874">Quinone</keyword>
<keyword id="KW-1185">Reference proteome</keyword>
<keyword id="KW-0793">Thylakoid</keyword>
<keyword id="KW-1278">Translocase</keyword>
<keyword id="KW-0812">Transmembrane</keyword>
<keyword id="KW-1133">Transmembrane helix</keyword>
<keyword id="KW-0813">Transport</keyword>
<protein>
    <recommendedName>
        <fullName evidence="1">NAD(P)H-quinone oxidoreductase subunit 4L</fullName>
        <ecNumber evidence="1">7.1.1.-</ecNumber>
    </recommendedName>
    <alternativeName>
        <fullName evidence="1">NAD(P)H dehydrogenase subunit 4L</fullName>
    </alternativeName>
    <alternativeName>
        <fullName evidence="1">NADH-plastoquinone oxidoreductase subunit 4L</fullName>
    </alternativeName>
    <alternativeName>
        <fullName evidence="1">NDH-1, subunit 4L</fullName>
    </alternativeName>
    <alternativeName>
        <fullName evidence="1">NDH-E</fullName>
    </alternativeName>
</protein>
<reference key="1">
    <citation type="journal article" date="1992" name="Plant Mol. Biol.">
        <title>Cloning and transcription analysis of the ndh(A-I-G-E) gene cluster and the ndhD gene of the cyanobacterium Synechocystis sp. PCC6803.</title>
        <authorList>
            <person name="Ellersiek U."/>
            <person name="Steinmueller K."/>
        </authorList>
    </citation>
    <scope>NUCLEOTIDE SEQUENCE [GENOMIC DNA]</scope>
</reference>
<reference key="2">
    <citation type="journal article" date="1995" name="DNA Res.">
        <title>Sequence analysis of the genome of the unicellular cyanobacterium Synechocystis sp. strain PCC6803. I. Sequence features in the 1 Mb region from map positions 64% to 92% of the genome.</title>
        <authorList>
            <person name="Kaneko T."/>
            <person name="Tanaka A."/>
            <person name="Sato S."/>
            <person name="Kotani H."/>
            <person name="Sazuka T."/>
            <person name="Miyajima N."/>
            <person name="Sugiura M."/>
            <person name="Tabata S."/>
        </authorList>
    </citation>
    <scope>NUCLEOTIDE SEQUENCE [LARGE SCALE GENOMIC DNA]</scope>
    <source>
        <strain>ATCC 27184 / PCC 6803 / N-1</strain>
    </source>
</reference>
<reference key="3">
    <citation type="journal article" date="1996" name="DNA Res.">
        <title>Sequence analysis of the genome of the unicellular cyanobacterium Synechocystis sp. strain PCC6803. II. Sequence determination of the entire genome and assignment of potential protein-coding regions.</title>
        <authorList>
            <person name="Kaneko T."/>
            <person name="Sato S."/>
            <person name="Kotani H."/>
            <person name="Tanaka A."/>
            <person name="Asamizu E."/>
            <person name="Nakamura Y."/>
            <person name="Miyajima N."/>
            <person name="Hirosawa M."/>
            <person name="Sugiura M."/>
            <person name="Sasamoto S."/>
            <person name="Kimura T."/>
            <person name="Hosouchi T."/>
            <person name="Matsuno A."/>
            <person name="Muraki A."/>
            <person name="Nakazaki N."/>
            <person name="Naruo K."/>
            <person name="Okumura S."/>
            <person name="Shimpo S."/>
            <person name="Takeuchi C."/>
            <person name="Wada T."/>
            <person name="Watanabe A."/>
            <person name="Yamada M."/>
            <person name="Yasuda M."/>
            <person name="Tabata S."/>
        </authorList>
    </citation>
    <scope>NUCLEOTIDE SEQUENCE [LARGE SCALE GENOMIC DNA]</scope>
    <source>
        <strain>ATCC 27184 / PCC 6803 / Kazusa</strain>
    </source>
</reference>
<organism>
    <name type="scientific">Synechocystis sp. (strain ATCC 27184 / PCC 6803 / Kazusa)</name>
    <dbReference type="NCBI Taxonomy" id="1111708"/>
    <lineage>
        <taxon>Bacteria</taxon>
        <taxon>Bacillati</taxon>
        <taxon>Cyanobacteriota</taxon>
        <taxon>Cyanophyceae</taxon>
        <taxon>Synechococcales</taxon>
        <taxon>Merismopediaceae</taxon>
        <taxon>Synechocystis</taxon>
    </lineage>
</organism>